<sequence length="122" mass="13438">MIQTESRLEVADNTGAREVMCIKVLGGSKRRYAGIGDIIKVTVKEATPRGRVKKGEIYNAVVVRTAKGVRRQDGSLIKFDGNAAVLLNNKLEPIGTRIFGPVTRELRSERFMKIVSLAPEVL</sequence>
<gene>
    <name evidence="1" type="primary">rplN</name>
    <name type="ordered locus">Bcep1808_0340</name>
</gene>
<evidence type="ECO:0000255" key="1">
    <source>
        <dbReference type="HAMAP-Rule" id="MF_01367"/>
    </source>
</evidence>
<evidence type="ECO:0000305" key="2"/>
<accession>A4JAQ0</accession>
<keyword id="KW-0687">Ribonucleoprotein</keyword>
<keyword id="KW-0689">Ribosomal protein</keyword>
<keyword id="KW-0694">RNA-binding</keyword>
<keyword id="KW-0699">rRNA-binding</keyword>
<organism>
    <name type="scientific">Burkholderia vietnamiensis (strain G4 / LMG 22486)</name>
    <name type="common">Burkholderia cepacia (strain R1808)</name>
    <dbReference type="NCBI Taxonomy" id="269482"/>
    <lineage>
        <taxon>Bacteria</taxon>
        <taxon>Pseudomonadati</taxon>
        <taxon>Pseudomonadota</taxon>
        <taxon>Betaproteobacteria</taxon>
        <taxon>Burkholderiales</taxon>
        <taxon>Burkholderiaceae</taxon>
        <taxon>Burkholderia</taxon>
        <taxon>Burkholderia cepacia complex</taxon>
    </lineage>
</organism>
<proteinExistence type="inferred from homology"/>
<protein>
    <recommendedName>
        <fullName evidence="1">Large ribosomal subunit protein uL14</fullName>
    </recommendedName>
    <alternativeName>
        <fullName evidence="2">50S ribosomal protein L14</fullName>
    </alternativeName>
</protein>
<reference key="1">
    <citation type="submission" date="2007-03" db="EMBL/GenBank/DDBJ databases">
        <title>Complete sequence of chromosome 1 of Burkholderia vietnamiensis G4.</title>
        <authorList>
            <consortium name="US DOE Joint Genome Institute"/>
            <person name="Copeland A."/>
            <person name="Lucas S."/>
            <person name="Lapidus A."/>
            <person name="Barry K."/>
            <person name="Detter J.C."/>
            <person name="Glavina del Rio T."/>
            <person name="Hammon N."/>
            <person name="Israni S."/>
            <person name="Dalin E."/>
            <person name="Tice H."/>
            <person name="Pitluck S."/>
            <person name="Chain P."/>
            <person name="Malfatti S."/>
            <person name="Shin M."/>
            <person name="Vergez L."/>
            <person name="Schmutz J."/>
            <person name="Larimer F."/>
            <person name="Land M."/>
            <person name="Hauser L."/>
            <person name="Kyrpides N."/>
            <person name="Tiedje J."/>
            <person name="Richardson P."/>
        </authorList>
    </citation>
    <scope>NUCLEOTIDE SEQUENCE [LARGE SCALE GENOMIC DNA]</scope>
    <source>
        <strain>G4 / LMG 22486</strain>
    </source>
</reference>
<name>RL14_BURVG</name>
<dbReference type="EMBL" id="CP000614">
    <property type="protein sequence ID" value="ABO53353.1"/>
    <property type="molecule type" value="Genomic_DNA"/>
</dbReference>
<dbReference type="SMR" id="A4JAQ0"/>
<dbReference type="KEGG" id="bvi:Bcep1808_0340"/>
<dbReference type="eggNOG" id="COG0093">
    <property type="taxonomic scope" value="Bacteria"/>
</dbReference>
<dbReference type="HOGENOM" id="CLU_095071_2_1_4"/>
<dbReference type="Proteomes" id="UP000002287">
    <property type="component" value="Chromosome 1"/>
</dbReference>
<dbReference type="GO" id="GO:0022625">
    <property type="term" value="C:cytosolic large ribosomal subunit"/>
    <property type="evidence" value="ECO:0007669"/>
    <property type="project" value="TreeGrafter"/>
</dbReference>
<dbReference type="GO" id="GO:0070180">
    <property type="term" value="F:large ribosomal subunit rRNA binding"/>
    <property type="evidence" value="ECO:0007669"/>
    <property type="project" value="TreeGrafter"/>
</dbReference>
<dbReference type="GO" id="GO:0003735">
    <property type="term" value="F:structural constituent of ribosome"/>
    <property type="evidence" value="ECO:0007669"/>
    <property type="project" value="InterPro"/>
</dbReference>
<dbReference type="GO" id="GO:0006412">
    <property type="term" value="P:translation"/>
    <property type="evidence" value="ECO:0007669"/>
    <property type="project" value="UniProtKB-UniRule"/>
</dbReference>
<dbReference type="CDD" id="cd00337">
    <property type="entry name" value="Ribosomal_uL14"/>
    <property type="match status" value="1"/>
</dbReference>
<dbReference type="FunFam" id="2.40.150.20:FF:000001">
    <property type="entry name" value="50S ribosomal protein L14"/>
    <property type="match status" value="1"/>
</dbReference>
<dbReference type="Gene3D" id="2.40.150.20">
    <property type="entry name" value="Ribosomal protein L14"/>
    <property type="match status" value="1"/>
</dbReference>
<dbReference type="HAMAP" id="MF_01367">
    <property type="entry name" value="Ribosomal_uL14"/>
    <property type="match status" value="1"/>
</dbReference>
<dbReference type="InterPro" id="IPR000218">
    <property type="entry name" value="Ribosomal_uL14"/>
</dbReference>
<dbReference type="InterPro" id="IPR005745">
    <property type="entry name" value="Ribosomal_uL14_bac-type"/>
</dbReference>
<dbReference type="InterPro" id="IPR019972">
    <property type="entry name" value="Ribosomal_uL14_CS"/>
</dbReference>
<dbReference type="InterPro" id="IPR036853">
    <property type="entry name" value="Ribosomal_uL14_sf"/>
</dbReference>
<dbReference type="NCBIfam" id="TIGR01067">
    <property type="entry name" value="rplN_bact"/>
    <property type="match status" value="1"/>
</dbReference>
<dbReference type="PANTHER" id="PTHR11761">
    <property type="entry name" value="50S/60S RIBOSOMAL PROTEIN L14/L23"/>
    <property type="match status" value="1"/>
</dbReference>
<dbReference type="PANTHER" id="PTHR11761:SF3">
    <property type="entry name" value="LARGE RIBOSOMAL SUBUNIT PROTEIN UL14M"/>
    <property type="match status" value="1"/>
</dbReference>
<dbReference type="Pfam" id="PF00238">
    <property type="entry name" value="Ribosomal_L14"/>
    <property type="match status" value="1"/>
</dbReference>
<dbReference type="SMART" id="SM01374">
    <property type="entry name" value="Ribosomal_L14"/>
    <property type="match status" value="1"/>
</dbReference>
<dbReference type="SUPFAM" id="SSF50193">
    <property type="entry name" value="Ribosomal protein L14"/>
    <property type="match status" value="1"/>
</dbReference>
<dbReference type="PROSITE" id="PS00049">
    <property type="entry name" value="RIBOSOMAL_L14"/>
    <property type="match status" value="1"/>
</dbReference>
<comment type="function">
    <text evidence="1">Binds to 23S rRNA. Forms part of two intersubunit bridges in the 70S ribosome.</text>
</comment>
<comment type="subunit">
    <text evidence="1">Part of the 50S ribosomal subunit. Forms a cluster with proteins L3 and L19. In the 70S ribosome, L14 and L19 interact and together make contacts with the 16S rRNA in bridges B5 and B8.</text>
</comment>
<comment type="similarity">
    <text evidence="1">Belongs to the universal ribosomal protein uL14 family.</text>
</comment>
<feature type="chain" id="PRO_1000055538" description="Large ribosomal subunit protein uL14">
    <location>
        <begin position="1"/>
        <end position="122"/>
    </location>
</feature>